<keyword id="KW-0010">Activator</keyword>
<keyword id="KW-0131">Cell cycle</keyword>
<keyword id="KW-0175">Coiled coil</keyword>
<keyword id="KW-0963">Cytoplasm</keyword>
<keyword id="KW-0597">Phosphoprotein</keyword>
<keyword id="KW-1185">Reference proteome</keyword>
<keyword id="KW-0810">Translation regulation</keyword>
<feature type="chain" id="PRO_0000233150" description="Cell division cycle and apoptosis regulator protein 1">
    <location>
        <begin position="1"/>
        <end position="1157"/>
    </location>
</feature>
<feature type="domain" description="SAP" evidence="4">
    <location>
        <begin position="643"/>
        <end position="677"/>
    </location>
</feature>
<feature type="region of interest" description="Disordered" evidence="5">
    <location>
        <begin position="289"/>
        <end position="365"/>
    </location>
</feature>
<feature type="region of interest" description="Disordered" evidence="5">
    <location>
        <begin position="608"/>
        <end position="641"/>
    </location>
</feature>
<feature type="region of interest" description="Disordered" evidence="5">
    <location>
        <begin position="685"/>
        <end position="721"/>
    </location>
</feature>
<feature type="region of interest" description="Disordered" evidence="5">
    <location>
        <begin position="804"/>
        <end position="926"/>
    </location>
</feature>
<feature type="coiled-coil region" evidence="3">
    <location>
        <begin position="601"/>
        <end position="625"/>
    </location>
</feature>
<feature type="coiled-coil region" evidence="3">
    <location>
        <begin position="1043"/>
        <end position="1128"/>
    </location>
</feature>
<feature type="compositionally biased region" description="Basic and acidic residues" evidence="5">
    <location>
        <begin position="300"/>
        <end position="341"/>
    </location>
</feature>
<feature type="compositionally biased region" description="Basic and acidic residues" evidence="5">
    <location>
        <begin position="348"/>
        <end position="359"/>
    </location>
</feature>
<feature type="compositionally biased region" description="Acidic residues" evidence="5">
    <location>
        <begin position="617"/>
        <end position="628"/>
    </location>
</feature>
<feature type="compositionally biased region" description="Basic and acidic residues" evidence="5">
    <location>
        <begin position="685"/>
        <end position="694"/>
    </location>
</feature>
<feature type="compositionally biased region" description="Basic and acidic residues" evidence="5">
    <location>
        <begin position="701"/>
        <end position="721"/>
    </location>
</feature>
<feature type="compositionally biased region" description="Basic and acidic residues" evidence="5">
    <location>
        <begin position="804"/>
        <end position="824"/>
    </location>
</feature>
<feature type="compositionally biased region" description="Basic and acidic residues" evidence="5">
    <location>
        <begin position="838"/>
        <end position="861"/>
    </location>
</feature>
<feature type="compositionally biased region" description="Acidic residues" evidence="5">
    <location>
        <begin position="862"/>
        <end position="896"/>
    </location>
</feature>
<feature type="compositionally biased region" description="Basic and acidic residues" evidence="5">
    <location>
        <begin position="897"/>
        <end position="926"/>
    </location>
</feature>
<feature type="modified residue" description="Phosphoserine" evidence="1">
    <location>
        <position position="1157"/>
    </location>
</feature>
<name>CCAR1_XENLA</name>
<dbReference type="EMBL" id="BC082374">
    <property type="protein sequence ID" value="AAH82374.1"/>
    <property type="molecule type" value="mRNA"/>
</dbReference>
<dbReference type="RefSeq" id="NP_001090254.1">
    <property type="nucleotide sequence ID" value="NM_001096785.1"/>
</dbReference>
<dbReference type="SMR" id="Q641G3"/>
<dbReference type="BioGRID" id="607867">
    <property type="interactions" value="1"/>
</dbReference>
<dbReference type="IntAct" id="Q641G3">
    <property type="interactions" value="1"/>
</dbReference>
<dbReference type="DNASU" id="779160"/>
<dbReference type="GeneID" id="779160"/>
<dbReference type="KEGG" id="xla:779160"/>
<dbReference type="AGR" id="Xenbase:XB-GENE-989032"/>
<dbReference type="CTD" id="779160"/>
<dbReference type="Xenbase" id="XB-GENE-989032">
    <property type="gene designation" value="ccar1.L"/>
</dbReference>
<dbReference type="OrthoDB" id="21006at2759"/>
<dbReference type="Proteomes" id="UP000186698">
    <property type="component" value="Chromosome 7L"/>
</dbReference>
<dbReference type="Bgee" id="779160">
    <property type="expression patterns" value="Expressed in pancreas and 19 other cell types or tissues"/>
</dbReference>
<dbReference type="GO" id="GO:0005634">
    <property type="term" value="C:nucleus"/>
    <property type="evidence" value="ECO:0000318"/>
    <property type="project" value="GO_Central"/>
</dbReference>
<dbReference type="GO" id="GO:0048471">
    <property type="term" value="C:perinuclear region of cytoplasm"/>
    <property type="evidence" value="ECO:0007669"/>
    <property type="project" value="UniProtKB-SubCell"/>
</dbReference>
<dbReference type="GO" id="GO:0006355">
    <property type="term" value="P:regulation of DNA-templated transcription"/>
    <property type="evidence" value="ECO:0000318"/>
    <property type="project" value="GO_Central"/>
</dbReference>
<dbReference type="GO" id="GO:0006417">
    <property type="term" value="P:regulation of translation"/>
    <property type="evidence" value="ECO:0007669"/>
    <property type="project" value="UniProtKB-KW"/>
</dbReference>
<dbReference type="FunFam" id="1.10.720.30:FF:000006">
    <property type="entry name" value="Cell division cycle and apoptosis regulator protein 1"/>
    <property type="match status" value="1"/>
</dbReference>
<dbReference type="Gene3D" id="1.10.720.30">
    <property type="entry name" value="SAP domain"/>
    <property type="match status" value="1"/>
</dbReference>
<dbReference type="InterPro" id="IPR045354">
    <property type="entry name" value="BURAN"/>
</dbReference>
<dbReference type="InterPro" id="IPR025224">
    <property type="entry name" value="CCAR1/CCAR2"/>
</dbReference>
<dbReference type="InterPro" id="IPR025954">
    <property type="entry name" value="DBC1/CARP1_inactive_NUDIX_dom"/>
</dbReference>
<dbReference type="InterPro" id="IPR011992">
    <property type="entry name" value="EF-hand-dom_pair"/>
</dbReference>
<dbReference type="InterPro" id="IPR045353">
    <property type="entry name" value="LAIKA"/>
</dbReference>
<dbReference type="InterPro" id="IPR025223">
    <property type="entry name" value="S1-like_RNA-bd_dom"/>
</dbReference>
<dbReference type="InterPro" id="IPR003034">
    <property type="entry name" value="SAP_dom"/>
</dbReference>
<dbReference type="InterPro" id="IPR036361">
    <property type="entry name" value="SAP_dom_sf"/>
</dbReference>
<dbReference type="PANTHER" id="PTHR14304">
    <property type="entry name" value="CELL DIVISION CYCLE AND APOPTOSIS REGULATOR PROTEIN"/>
    <property type="match status" value="1"/>
</dbReference>
<dbReference type="PANTHER" id="PTHR14304:SF14">
    <property type="entry name" value="CELL DIVISION CYCLE AND APOPTOSIS REGULATOR PROTEIN 1"/>
    <property type="match status" value="1"/>
</dbReference>
<dbReference type="Pfam" id="PF19257">
    <property type="entry name" value="BURAN"/>
    <property type="match status" value="1"/>
</dbReference>
<dbReference type="Pfam" id="PF14443">
    <property type="entry name" value="DBC1"/>
    <property type="match status" value="1"/>
</dbReference>
<dbReference type="Pfam" id="PF19256">
    <property type="entry name" value="LAIKA"/>
    <property type="match status" value="1"/>
</dbReference>
<dbReference type="Pfam" id="PF14444">
    <property type="entry name" value="S1-like"/>
    <property type="match status" value="1"/>
</dbReference>
<dbReference type="Pfam" id="PF02037">
    <property type="entry name" value="SAP"/>
    <property type="match status" value="1"/>
</dbReference>
<dbReference type="SMART" id="SM01122">
    <property type="entry name" value="DBC1"/>
    <property type="match status" value="1"/>
</dbReference>
<dbReference type="SMART" id="SM00513">
    <property type="entry name" value="SAP"/>
    <property type="match status" value="1"/>
</dbReference>
<dbReference type="SUPFAM" id="SSF47473">
    <property type="entry name" value="EF-hand"/>
    <property type="match status" value="1"/>
</dbReference>
<dbReference type="SUPFAM" id="SSF68906">
    <property type="entry name" value="SAP domain"/>
    <property type="match status" value="1"/>
</dbReference>
<dbReference type="PROSITE" id="PS50800">
    <property type="entry name" value="SAP"/>
    <property type="match status" value="1"/>
</dbReference>
<protein>
    <recommendedName>
        <fullName>Cell division cycle and apoptosis regulator protein 1</fullName>
    </recommendedName>
</protein>
<evidence type="ECO:0000250" key="1"/>
<evidence type="ECO:0000250" key="2">
    <source>
        <dbReference type="UniProtKB" id="Q8IX12"/>
    </source>
</evidence>
<evidence type="ECO:0000255" key="3"/>
<evidence type="ECO:0000255" key="4">
    <source>
        <dbReference type="PROSITE-ProRule" id="PRU00186"/>
    </source>
</evidence>
<evidence type="ECO:0000256" key="5">
    <source>
        <dbReference type="SAM" id="MobiDB-lite"/>
    </source>
</evidence>
<sequence>MAQFGGQKNPPPWATQFTATAVSQPGPLAVQQSSLLGASPTIYTQQSALAAAGLASPSPANYQLSQTAALQQQAAAAAAAAAAALQQQYTQPQQTIYSVQQQLQPPPQAILTQPAVALPTSLALSTPQQAAQITVSYPTPRSNQQQTQPQKQRVFTGVVTKLHETFGFVDEDVFFQLTAVKGKSPQAGDRVLVEATYNPNMPFKWNAQRIQTLPNQNPASAQSLIKNPAAVMQPVAQPTAYAVQTQPPPQAQTLLQAQISAATLTPLLQTQTSPLLQQPQQKAGLLQTPVRIVSQPQPVRRIEPPSRFSVRNDRGDSILSRKDDRNRERERERRRSRDRSPQRKRSRERSPRRERERSPRRPRRVVPRYTVQISKFCLDCPGCDTMELRRRYQNLYIPSDFFDAQFTWVDAFPISRPFQLGNYSNFYIMHKEVDPLEKNTAIVDPPDADHTYSAKVMLLASPSLEELYHKSCALAEDPIEVREGFQHPARLIKFLVGMKGKDEAMAIGGHWSPSLDGPNPDKDPSVLIRTAVRCCKALTGIELSLCTQWYRFAEIRYHRPEETHKGRTVPAHVETVVLFFPDVWHCLPTRSEWENLCHGYKQQLVDKLQGDRKEADGEQEEEDKEDGDAKEISTPTHWSKLDPKIMKVNDLRKELESRTLSSKGLKSQLIARLTKQLRIEEQKEEQKELEKCEKEEEEEEERKSEDDKEEEERKRQEELERQRREKRYMLPDEPAIIVHPNWSAKNGKFDCSIMSLSVLLDYRIEDNKEHSFEVSLFAELFNEMLQRDFGVRIYRELLALPEKEEKKDKEKKCKKEDKRERKEDKDDDDEPKPKRRKSSDDKIKLEEKEERKRDDRRKEDYREEDDPDYENQDDYEPIAAEEDDGDYDDREDDDDDSSSKDKREDKRDGNRYSKERQSKDKEKDKKQMVTVNRDLLMAFVYFDQSHCGYLLEKDLEEILYTLGLHLSRAQVKKLFTKILLKESLLYRKLTDTATEDGSHEETDPLHNDILGNCSLLPSKAVRTGLSTVEDKGGLIVYKGAMVDVGSLLQKLEKSEKTRTELEHRLQTLESKTEEDEKTISQLEASNRNLSEELKQTKDDVGHLKDSLKAAEDTRSLYEDQLTNTIKNLSAAMGEIQVVLNKNPSTTEDQKSKENGSS</sequence>
<gene>
    <name type="primary">ccar1</name>
</gene>
<comment type="function">
    <text evidence="2">Transcriptional coactivator for nuclear receptors which may play an important role in regulating cell growth and apoptosis.</text>
</comment>
<comment type="subcellular location">
    <subcellularLocation>
        <location evidence="2">Cytoplasm</location>
        <location evidence="2">Perinuclear region</location>
    </subcellularLocation>
</comment>
<proteinExistence type="evidence at transcript level"/>
<organism>
    <name type="scientific">Xenopus laevis</name>
    <name type="common">African clawed frog</name>
    <dbReference type="NCBI Taxonomy" id="8355"/>
    <lineage>
        <taxon>Eukaryota</taxon>
        <taxon>Metazoa</taxon>
        <taxon>Chordata</taxon>
        <taxon>Craniata</taxon>
        <taxon>Vertebrata</taxon>
        <taxon>Euteleostomi</taxon>
        <taxon>Amphibia</taxon>
        <taxon>Batrachia</taxon>
        <taxon>Anura</taxon>
        <taxon>Pipoidea</taxon>
        <taxon>Pipidae</taxon>
        <taxon>Xenopodinae</taxon>
        <taxon>Xenopus</taxon>
        <taxon>Xenopus</taxon>
    </lineage>
</organism>
<accession>Q641G3</accession>
<reference key="1">
    <citation type="submission" date="2004-09" db="EMBL/GenBank/DDBJ databases">
        <authorList>
            <consortium name="NIH - Xenopus Gene Collection (XGC) project"/>
        </authorList>
    </citation>
    <scope>NUCLEOTIDE SEQUENCE [LARGE SCALE MRNA]</scope>
    <source>
        <tissue>Embryo</tissue>
    </source>
</reference>